<reference key="1">
    <citation type="journal article" date="1985" name="J. Virol.">
        <title>Envelope gene and long terminal repeat determine the different biological properties of Rauscher, Friend, and Moloney mink cell focus-inducing viruses.</title>
        <authorList>
            <person name="Vogt M."/>
            <person name="Haggblom C."/>
            <person name="Swift S."/>
            <person name="Haas M."/>
        </authorList>
    </citation>
    <scope>NUCLEOTIDE SEQUENCE [GENOMIC RNA]</scope>
</reference>
<protein>
    <recommendedName>
        <fullName>Envelope glycoprotein</fullName>
    </recommendedName>
    <alternativeName>
        <fullName>Env polyprotein</fullName>
    </alternativeName>
    <component>
        <recommendedName>
            <fullName>Surface protein</fullName>
            <shortName>SU</shortName>
        </recommendedName>
        <alternativeName>
            <fullName>Glycoprotein 70</fullName>
            <shortName>gp70</shortName>
        </alternativeName>
    </component>
    <component>
        <recommendedName>
            <fullName>Transmembrane protein</fullName>
            <shortName>TM</shortName>
        </recommendedName>
        <alternativeName>
            <fullName>Envelope protein p15E</fullName>
        </alternativeName>
    </component>
    <component>
        <recommendedName>
            <fullName>R-peptide</fullName>
        </recommendedName>
        <alternativeName>
            <fullName>p2E</fullName>
        </alternativeName>
    </component>
</protein>
<gene>
    <name type="primary">env</name>
</gene>
<evidence type="ECO:0000250" key="1"/>
<evidence type="ECO:0000255" key="2"/>
<evidence type="ECO:0000256" key="3">
    <source>
        <dbReference type="SAM" id="MobiDB-lite"/>
    </source>
</evidence>
<dbReference type="EMBL" id="M10100">
    <property type="protein sequence ID" value="AAA46528.1"/>
    <property type="molecule type" value="Genomic_RNA"/>
</dbReference>
<dbReference type="PIR" id="A03990">
    <property type="entry name" value="VCMVRV"/>
</dbReference>
<dbReference type="SMR" id="P06445"/>
<dbReference type="GlyCosmos" id="P06445">
    <property type="glycosylation" value="7 sites, No reported glycans"/>
</dbReference>
<dbReference type="GO" id="GO:0020002">
    <property type="term" value="C:host cell plasma membrane"/>
    <property type="evidence" value="ECO:0007669"/>
    <property type="project" value="UniProtKB-SubCell"/>
</dbReference>
<dbReference type="GO" id="GO:0016020">
    <property type="term" value="C:membrane"/>
    <property type="evidence" value="ECO:0007669"/>
    <property type="project" value="UniProtKB-KW"/>
</dbReference>
<dbReference type="GO" id="GO:0019031">
    <property type="term" value="C:viral envelope"/>
    <property type="evidence" value="ECO:0007669"/>
    <property type="project" value="UniProtKB-KW"/>
</dbReference>
<dbReference type="GO" id="GO:0055036">
    <property type="term" value="C:virion membrane"/>
    <property type="evidence" value="ECO:0007669"/>
    <property type="project" value="UniProtKB-SubCell"/>
</dbReference>
<dbReference type="GO" id="GO:0019064">
    <property type="term" value="P:fusion of virus membrane with host plasma membrane"/>
    <property type="evidence" value="ECO:0007669"/>
    <property type="project" value="UniProtKB-KW"/>
</dbReference>
<dbReference type="GO" id="GO:0046718">
    <property type="term" value="P:symbiont entry into host cell"/>
    <property type="evidence" value="ECO:0007669"/>
    <property type="project" value="UniProtKB-KW"/>
</dbReference>
<dbReference type="GO" id="GO:0019062">
    <property type="term" value="P:virion attachment to host cell"/>
    <property type="evidence" value="ECO:0007669"/>
    <property type="project" value="UniProtKB-KW"/>
</dbReference>
<dbReference type="CDD" id="cd09851">
    <property type="entry name" value="HTLV-1-like_HR1-HR2"/>
    <property type="match status" value="1"/>
</dbReference>
<dbReference type="FunFam" id="1.10.287.210:FF:000005">
    <property type="entry name" value="Envelope glycoprotein"/>
    <property type="match status" value="1"/>
</dbReference>
<dbReference type="Gene3D" id="1.10.287.210">
    <property type="match status" value="1"/>
</dbReference>
<dbReference type="Gene3D" id="3.90.310.10">
    <property type="entry name" value="ENV polyprotein, receptor-binding domain"/>
    <property type="match status" value="1"/>
</dbReference>
<dbReference type="InterPro" id="IPR008981">
    <property type="entry name" value="FMuLV_rcpt-bd"/>
</dbReference>
<dbReference type="InterPro" id="IPR018154">
    <property type="entry name" value="TLV/ENV_coat_polyprotein"/>
</dbReference>
<dbReference type="PANTHER" id="PTHR10424:SF72">
    <property type="entry name" value="BC035947 PROTEIN-RELATED"/>
    <property type="match status" value="1"/>
</dbReference>
<dbReference type="PANTHER" id="PTHR10424">
    <property type="entry name" value="VIRAL ENVELOPE PROTEIN"/>
    <property type="match status" value="1"/>
</dbReference>
<dbReference type="Pfam" id="PF00429">
    <property type="entry name" value="TLV_coat"/>
    <property type="match status" value="1"/>
</dbReference>
<dbReference type="SUPFAM" id="SSF49830">
    <property type="entry name" value="ENV polyprotein, receptor-binding domain"/>
    <property type="match status" value="1"/>
</dbReference>
<dbReference type="SUPFAM" id="SSF58069">
    <property type="entry name" value="Virus ectodomain"/>
    <property type="match status" value="1"/>
</dbReference>
<organism>
    <name type="scientific">Rauscher mink cell focus-inducing virus</name>
    <dbReference type="NCBI Taxonomy" id="11784"/>
    <lineage>
        <taxon>Viruses</taxon>
        <taxon>Riboviria</taxon>
        <taxon>Pararnavirae</taxon>
        <taxon>Artverviricota</taxon>
        <taxon>Revtraviricetes</taxon>
        <taxon>Ortervirales</taxon>
        <taxon>Retroviridae</taxon>
        <taxon>Orthoretrovirinae</taxon>
        <taxon>Gammaretrovirus</taxon>
        <taxon>Murine leukemia virus</taxon>
    </lineage>
</organism>
<feature type="signal peptide" evidence="2">
    <location>
        <begin position="1"/>
        <end position="32"/>
    </location>
</feature>
<feature type="chain" id="PRO_0000239598" description="Envelope glycoprotein">
    <location>
        <begin position="33"/>
        <end position="640"/>
    </location>
</feature>
<feature type="chain" id="PRO_0000040792" description="Surface protein" evidence="1">
    <location>
        <begin position="33"/>
        <end position="443"/>
    </location>
</feature>
<feature type="chain" id="PRO_0000040793" description="Transmembrane protein" evidence="1">
    <location>
        <begin position="444"/>
        <end position="623"/>
    </location>
</feature>
<feature type="peptide" id="PRO_0000040794" description="R-peptide" evidence="1">
    <location>
        <begin position="624"/>
        <end position="640"/>
    </location>
</feature>
<feature type="topological domain" description="Extracellular" evidence="2">
    <location>
        <begin position="33"/>
        <end position="584"/>
    </location>
</feature>
<feature type="transmembrane region" description="Helical" evidence="2">
    <location>
        <begin position="585"/>
        <end position="605"/>
    </location>
</feature>
<feature type="topological domain" description="Cytoplasmic" evidence="2">
    <location>
        <begin position="606"/>
        <end position="640"/>
    </location>
</feature>
<feature type="region of interest" description="Receptor-binding domain (RBD)" evidence="2">
    <location>
        <begin position="32"/>
        <end position="236"/>
    </location>
</feature>
<feature type="region of interest" description="Disordered" evidence="3">
    <location>
        <begin position="259"/>
        <end position="284"/>
    </location>
</feature>
<feature type="region of interest" description="Fusion peptide" evidence="1">
    <location>
        <begin position="446"/>
        <end position="466"/>
    </location>
</feature>
<feature type="region of interest" description="Immunosuppression" evidence="1">
    <location>
        <begin position="512"/>
        <end position="528"/>
    </location>
</feature>
<feature type="coiled-coil region" evidence="2">
    <location>
        <begin position="477"/>
        <end position="511"/>
    </location>
</feature>
<feature type="short sequence motif" description="CXXC">
    <location>
        <begin position="310"/>
        <end position="313"/>
    </location>
</feature>
<feature type="short sequence motif" description="CX6CC">
    <location>
        <begin position="529"/>
        <end position="537"/>
    </location>
</feature>
<feature type="short sequence motif" description="YXXL motif; contains endocytosis signal" evidence="1">
    <location>
        <begin position="629"/>
        <end position="632"/>
    </location>
</feature>
<feature type="site" description="Cleavage; by host" evidence="1">
    <location>
        <begin position="443"/>
        <end position="444"/>
    </location>
</feature>
<feature type="site" description="Cleavage; by viral protease p14" evidence="1">
    <location>
        <begin position="623"/>
        <end position="624"/>
    </location>
</feature>
<feature type="lipid moiety-binding region" description="S-palmitoyl cysteine; by host" evidence="1">
    <location>
        <position position="604"/>
    </location>
</feature>
<feature type="glycosylation site" description="N-linked (GlcNAc...) asparagine; by host" evidence="2">
    <location>
        <position position="43"/>
    </location>
</feature>
<feature type="glycosylation site" description="N-linked (GlcNAc...) asparagine; by host" evidence="2">
    <location>
        <position position="58"/>
    </location>
</feature>
<feature type="glycosylation site" description="N-linked (GlcNAc...) asparagine; by host" evidence="2">
    <location>
        <position position="300"/>
    </location>
</feature>
<feature type="glycosylation site" description="N-linked (GlcNAc...) asparagine; by host" evidence="2">
    <location>
        <position position="332"/>
    </location>
</feature>
<feature type="glycosylation site" description="N-linked (GlcNAc...) asparagine; by host" evidence="2">
    <location>
        <position position="339"/>
    </location>
</feature>
<feature type="glycosylation site" description="N-linked (GlcNAc...) asparagine; by host" evidence="2">
    <location>
        <position position="372"/>
    </location>
</feature>
<feature type="glycosylation site" description="N-linked (GlcNAc...) asparagine; by host" evidence="2">
    <location>
        <position position="408"/>
    </location>
</feature>
<feature type="disulfide bond" evidence="1">
    <location>
        <begin position="113"/>
        <end position="130"/>
    </location>
</feature>
<feature type="disulfide bond" evidence="1">
    <location>
        <begin position="122"/>
        <end position="135"/>
    </location>
</feature>
<feature type="disulfide bond" description="Interchain (between SU and TM chains, or C-310 with C-535); in linked form" evidence="1">
    <location>
        <begin position="310"/>
        <end position="537"/>
    </location>
</feature>
<feature type="disulfide bond" evidence="1">
    <location>
        <begin position="310"/>
        <end position="313"/>
    </location>
</feature>
<feature type="disulfide bond" evidence="1">
    <location>
        <begin position="529"/>
        <end position="536"/>
    </location>
</feature>
<sequence>MACSTFSKPLKDKINPWGPLIILGILIRAGVSVQHDSPHKVFNVTWRVTNLMTGQTANATSLLGTMTDAFPKLYFDLCDLVGDYWDDPEPDIGDGCRTPGGRRRTRLYDFYVCPGHTVPIGCGGPGEGYCGKWGCETTGQAYWKPSSSWDLISLKRGNTPKDQGPCYDSSVSSDIKGATPGGRCNPLVLEFTDAGKKASWDGPKVWGLRLYRSTGTDPVTRFSLTRRVLNIGPRVPIGPNPVIIDQLPPSRPVQIMLPRPPQPPPPGAASIVPETAPPSQQPGTGDRLLNLVDGAYQALNLTSPDKTQECWLCLVAEPPYYEGVAVLGTYSNHTSAPTNCSVASQHKLTLSEVTGQGLCIGTVPKTHQALCNTTLKTNKGSYYLVAPAGTTWACNTGLTPCLSATVLNRTTDYCVLVELWPRVTYHPPSYVYSQFEKSYRHKREPVSLTLALLLGGLTMGGIAAGVGTGTTALVATQQFQQLHAAVQDDLKEVEKSITNLEKSLTSLSEVVLQNRRGLDLLFLKEGGLCAALKEECCFYADHTGLVRDSMAKLRERLTQRQKLFESSQGWFEGLFNRSPWFTTLISTIMGPLIILLLILLFGPCILNRLVQFVKDRISVVQALVLTQQYHQLKPLEYEPQ</sequence>
<organismHost>
    <name type="scientific">Mus musculus</name>
    <name type="common">Mouse</name>
    <dbReference type="NCBI Taxonomy" id="10090"/>
</organismHost>
<proteinExistence type="inferred from homology"/>
<name>ENV_RMCFV</name>
<accession>P06445</accession>
<accession>Q85628</accession>
<accession>Q85629</accession>
<accession>Q89529</accession>
<comment type="function">
    <text evidence="1">The surface protein (SU) attaches the virus to the host cell by binding to its receptor. This interaction triggers the refolding of the transmembrane protein (TM) and is thought to activate its fusogenic potential by unmasking its fusion peptide. Fusion occurs at the host cell plasma membrane (By similarity).</text>
</comment>
<comment type="function">
    <text evidence="1">The transmembrane protein (TM) acts as a class I viral fusion protein. Under the current model, the protein has at least 3 conformational states: pre-fusion native state, pre-hairpin intermediate state, and post-fusion hairpin state. During viral and target cell membrane fusion, the coiled coil regions (heptad repeats) assume a trimer-of-hairpins structure, positioning the fusion peptide in close proximity to the C-terminal region of the ectodomain. The formation of this structure appears to drive apposition and subsequent fusion of viral and target cell membranes. Membranes fusion leads to delivery of the nucleocapsid into the cytoplasm (By similarity).</text>
</comment>
<comment type="subunit">
    <text evidence="1">The mature envelope protein (Env) consists of a trimer of SU-TM heterodimers attached by a labile interchain disulfide bond.</text>
</comment>
<comment type="subcellular location">
    <molecule>Transmembrane protein</molecule>
    <subcellularLocation>
        <location evidence="1">Virion membrane</location>
        <topology evidence="1">Single-pass type I membrane protein</topology>
    </subcellularLocation>
    <subcellularLocation>
        <location evidence="1">Host cell membrane</location>
        <topology evidence="1">Single-pass type I membrane protein</topology>
    </subcellularLocation>
</comment>
<comment type="subcellular location">
    <molecule>Surface protein</molecule>
    <subcellularLocation>
        <location>Virion membrane</location>
        <topology>Peripheral membrane protein</topology>
    </subcellularLocation>
    <subcellularLocation>
        <location evidence="1">Host cell membrane</location>
        <topology evidence="1">Peripheral membrane protein</topology>
    </subcellularLocation>
    <text evidence="1">The surface protein is not anchored to the viral envelope, but associates with the virion surface through its binding to TM. Both proteins are thought to be concentrated at the site of budding and incorporated into the virions possibly by contacts between the cytoplasmic tail of Env and the N-terminus of Gag (By similarity).</text>
</comment>
<comment type="subcellular location">
    <molecule>R-peptide</molecule>
    <subcellularLocation>
        <location evidence="1">Host cell membrane</location>
        <topology evidence="1">Peripheral membrane protein</topology>
    </subcellularLocation>
    <text evidence="1">The R-peptide is membrane-associated through its palmitate.</text>
</comment>
<comment type="domain">
    <text evidence="1">The 17 amino acids long immunosuppressive region is present in many retroviral envelope proteins. Synthetic peptides derived from this relatively conserved sequence inhibit immune function in vitro and in vivo (By similarity).</text>
</comment>
<comment type="domain">
    <text>The YXXL motif is involved in determining the exact site of viral release at the surface of infected mononuclear cells and promotes endocytosis.</text>
</comment>
<comment type="PTM">
    <text evidence="1">Specific enzymatic cleavages in vivo yield mature proteins. Envelope glycoproteins are synthesized as an inactive precursor that is N-glycosylated and processed likely by host cell furin or by a furin-like protease in the Golgi to yield the mature SU and TM proteins. The cleavage site between SU and TM requires the minimal sequence [KR]-X-[KR]-R. The R-peptide is released from the C-terminus of the cytoplasmic tail of the TM protein upon particle formation as a result of proteolytic cleavage by the viral protease. Cleavage of this peptide is required for TM to become fusogenic (By similarity).</text>
</comment>
<comment type="PTM">
    <text evidence="1">The CXXC motif is highly conserved across a broad range of retroviral envelope proteins. It is thought to participate in the formation of a labile disulfide bond possibly with the CX6CC motif present in the transmembrane protein. Isomerization of the intersubunit disulfide bond to an SU intrachain disulfide bond is thought to occur upon receptor recognition in order to allow membrane fusion (By similarity).</text>
</comment>
<comment type="PTM">
    <text evidence="1">The transmembrane protein is palmitoylated.</text>
</comment>
<comment type="PTM">
    <text evidence="1">The R-peptide is palmitoylated.</text>
</comment>
<keyword id="KW-0165">Cleavage on pair of basic residues</keyword>
<keyword id="KW-0175">Coiled coil</keyword>
<keyword id="KW-1015">Disulfide bond</keyword>
<keyword id="KW-1169">Fusion of virus membrane with host cell membrane</keyword>
<keyword id="KW-1168">Fusion of virus membrane with host membrane</keyword>
<keyword id="KW-0325">Glycoprotein</keyword>
<keyword id="KW-1032">Host cell membrane</keyword>
<keyword id="KW-1043">Host membrane</keyword>
<keyword id="KW-0945">Host-virus interaction</keyword>
<keyword id="KW-0449">Lipoprotein</keyword>
<keyword id="KW-0472">Membrane</keyword>
<keyword id="KW-0564">Palmitate</keyword>
<keyword id="KW-0732">Signal</keyword>
<keyword id="KW-0812">Transmembrane</keyword>
<keyword id="KW-1133">Transmembrane helix</keyword>
<keyword id="KW-1161">Viral attachment to host cell</keyword>
<keyword id="KW-0261">Viral envelope protein</keyword>
<keyword id="KW-1162">Viral penetration into host cytoplasm</keyword>
<keyword id="KW-0946">Virion</keyword>
<keyword id="KW-1160">Virus entry into host cell</keyword>